<keyword id="KW-0539">Nucleus</keyword>
<keyword id="KW-1185">Reference proteome</keyword>
<keyword id="KW-0677">Repeat</keyword>
<keyword id="KW-0687">Ribonucleoprotein</keyword>
<keyword id="KW-0690">Ribosome biogenesis</keyword>
<keyword id="KW-0698">rRNA processing</keyword>
<name>UTP6_SCHPO</name>
<sequence>MAEKVQYYMEQSVPELEDLLEKNIFNRDEINNIIKTRRVFEEKLARRQVKLNDFLSYIQYEINLETLRAKRHKRLNITGKITISDYAGPRKVLFLFLRATNKFFGDVTLWLDYIHYAQKIKAVNIVGKICVAALQKHPNNAELWVVACDHEFSINANVSAARALMNRALRLNQENPVIWAAYFRLELSYMTKLFARSQILTGNISSKTENITNGVSEDTIGSLSSDTIQLPMVSMEEFLGSSSSEVRKNDSDLNISDDIGNISSKEQQTQKFANVLLQIILNSRKNLSLQNYVGFFVSVLDALFECFDVPVVQYMYQENIIGICNEHFEHFKNESGEIYGVLLHRWCFLEIFIKLRGAYPSNDSGISGKGIFGLKKNDPRITSMVLTDPGFVDDLQAIVEKYQSISSDFQIPFKTKKIFYSFFVKTLHAISSSSAAESSIALALHMLVINAFQSMEKLKILTFDDSLQEIYKEAQIQSGTFMSNATLS</sequence>
<gene>
    <name type="primary">utp6</name>
    <name type="ORF">SPBC244.02c</name>
</gene>
<accession>O60188</accession>
<organism>
    <name type="scientific">Schizosaccharomyces pombe (strain 972 / ATCC 24843)</name>
    <name type="common">Fission yeast</name>
    <dbReference type="NCBI Taxonomy" id="284812"/>
    <lineage>
        <taxon>Eukaryota</taxon>
        <taxon>Fungi</taxon>
        <taxon>Dikarya</taxon>
        <taxon>Ascomycota</taxon>
        <taxon>Taphrinomycotina</taxon>
        <taxon>Schizosaccharomycetes</taxon>
        <taxon>Schizosaccharomycetales</taxon>
        <taxon>Schizosaccharomycetaceae</taxon>
        <taxon>Schizosaccharomyces</taxon>
    </lineage>
</organism>
<reference key="1">
    <citation type="journal article" date="2002" name="Nature">
        <title>The genome sequence of Schizosaccharomyces pombe.</title>
        <authorList>
            <person name="Wood V."/>
            <person name="Gwilliam R."/>
            <person name="Rajandream M.A."/>
            <person name="Lyne M.H."/>
            <person name="Lyne R."/>
            <person name="Stewart A."/>
            <person name="Sgouros J.G."/>
            <person name="Peat N."/>
            <person name="Hayles J."/>
            <person name="Baker S.G."/>
            <person name="Basham D."/>
            <person name="Bowman S."/>
            <person name="Brooks K."/>
            <person name="Brown D."/>
            <person name="Brown S."/>
            <person name="Chillingworth T."/>
            <person name="Churcher C.M."/>
            <person name="Collins M."/>
            <person name="Connor R."/>
            <person name="Cronin A."/>
            <person name="Davis P."/>
            <person name="Feltwell T."/>
            <person name="Fraser A."/>
            <person name="Gentles S."/>
            <person name="Goble A."/>
            <person name="Hamlin N."/>
            <person name="Harris D.E."/>
            <person name="Hidalgo J."/>
            <person name="Hodgson G."/>
            <person name="Holroyd S."/>
            <person name="Hornsby T."/>
            <person name="Howarth S."/>
            <person name="Huckle E.J."/>
            <person name="Hunt S."/>
            <person name="Jagels K."/>
            <person name="James K.D."/>
            <person name="Jones L."/>
            <person name="Jones M."/>
            <person name="Leather S."/>
            <person name="McDonald S."/>
            <person name="McLean J."/>
            <person name="Mooney P."/>
            <person name="Moule S."/>
            <person name="Mungall K.L."/>
            <person name="Murphy L.D."/>
            <person name="Niblett D."/>
            <person name="Odell C."/>
            <person name="Oliver K."/>
            <person name="O'Neil S."/>
            <person name="Pearson D."/>
            <person name="Quail M.A."/>
            <person name="Rabbinowitsch E."/>
            <person name="Rutherford K.M."/>
            <person name="Rutter S."/>
            <person name="Saunders D."/>
            <person name="Seeger K."/>
            <person name="Sharp S."/>
            <person name="Skelton J."/>
            <person name="Simmonds M.N."/>
            <person name="Squares R."/>
            <person name="Squares S."/>
            <person name="Stevens K."/>
            <person name="Taylor K."/>
            <person name="Taylor R.G."/>
            <person name="Tivey A."/>
            <person name="Walsh S.V."/>
            <person name="Warren T."/>
            <person name="Whitehead S."/>
            <person name="Woodward J.R."/>
            <person name="Volckaert G."/>
            <person name="Aert R."/>
            <person name="Robben J."/>
            <person name="Grymonprez B."/>
            <person name="Weltjens I."/>
            <person name="Vanstreels E."/>
            <person name="Rieger M."/>
            <person name="Schaefer M."/>
            <person name="Mueller-Auer S."/>
            <person name="Gabel C."/>
            <person name="Fuchs M."/>
            <person name="Duesterhoeft A."/>
            <person name="Fritzc C."/>
            <person name="Holzer E."/>
            <person name="Moestl D."/>
            <person name="Hilbert H."/>
            <person name="Borzym K."/>
            <person name="Langer I."/>
            <person name="Beck A."/>
            <person name="Lehrach H."/>
            <person name="Reinhardt R."/>
            <person name="Pohl T.M."/>
            <person name="Eger P."/>
            <person name="Zimmermann W."/>
            <person name="Wedler H."/>
            <person name="Wambutt R."/>
            <person name="Purnelle B."/>
            <person name="Goffeau A."/>
            <person name="Cadieu E."/>
            <person name="Dreano S."/>
            <person name="Gloux S."/>
            <person name="Lelaure V."/>
            <person name="Mottier S."/>
            <person name="Galibert F."/>
            <person name="Aves S.J."/>
            <person name="Xiang Z."/>
            <person name="Hunt C."/>
            <person name="Moore K."/>
            <person name="Hurst S.M."/>
            <person name="Lucas M."/>
            <person name="Rochet M."/>
            <person name="Gaillardin C."/>
            <person name="Tallada V.A."/>
            <person name="Garzon A."/>
            <person name="Thode G."/>
            <person name="Daga R.R."/>
            <person name="Cruzado L."/>
            <person name="Jimenez J."/>
            <person name="Sanchez M."/>
            <person name="del Rey F."/>
            <person name="Benito J."/>
            <person name="Dominguez A."/>
            <person name="Revuelta J.L."/>
            <person name="Moreno S."/>
            <person name="Armstrong J."/>
            <person name="Forsburg S.L."/>
            <person name="Cerutti L."/>
            <person name="Lowe T."/>
            <person name="McCombie W.R."/>
            <person name="Paulsen I."/>
            <person name="Potashkin J."/>
            <person name="Shpakovski G.V."/>
            <person name="Ussery D."/>
            <person name="Barrell B.G."/>
            <person name="Nurse P."/>
        </authorList>
    </citation>
    <scope>NUCLEOTIDE SEQUENCE [LARGE SCALE GENOMIC DNA]</scope>
    <source>
        <strain>972 / ATCC 24843</strain>
    </source>
</reference>
<feature type="chain" id="PRO_0000374010" description="U3 small nucleolar RNA-associated protein 6">
    <location>
        <begin position="1"/>
        <end position="488"/>
    </location>
</feature>
<feature type="repeat" description="HAT 1">
    <location>
        <begin position="31"/>
        <end position="63"/>
    </location>
</feature>
<feature type="repeat" description="HAT 2">
    <location>
        <begin position="87"/>
        <end position="119"/>
    </location>
</feature>
<feature type="repeat" description="HAT 3">
    <location>
        <begin position="121"/>
        <end position="153"/>
    </location>
</feature>
<feature type="repeat" description="HAT 4">
    <location>
        <begin position="156"/>
        <end position="188"/>
    </location>
</feature>
<proteinExistence type="inferred from homology"/>
<dbReference type="EMBL" id="CU329671">
    <property type="protein sequence ID" value="CAA19317.1"/>
    <property type="molecule type" value="Genomic_DNA"/>
</dbReference>
<dbReference type="PIR" id="T39963">
    <property type="entry name" value="T39963"/>
</dbReference>
<dbReference type="RefSeq" id="NP_596813.1">
    <property type="nucleotide sequence ID" value="NM_001023833.2"/>
</dbReference>
<dbReference type="SMR" id="O60188"/>
<dbReference type="BioGRID" id="277176">
    <property type="interactions" value="1"/>
</dbReference>
<dbReference type="FunCoup" id="O60188">
    <property type="interactions" value="93"/>
</dbReference>
<dbReference type="STRING" id="284812.O60188"/>
<dbReference type="iPTMnet" id="O60188"/>
<dbReference type="PaxDb" id="4896-SPBC244.02c.1"/>
<dbReference type="EnsemblFungi" id="SPBC244.02c.1">
    <property type="protein sequence ID" value="SPBC244.02c.1:pep"/>
    <property type="gene ID" value="SPBC244.02c"/>
</dbReference>
<dbReference type="GeneID" id="2540651"/>
<dbReference type="KEGG" id="spo:2540651"/>
<dbReference type="PomBase" id="SPBC244.02c">
    <property type="gene designation" value="utp6"/>
</dbReference>
<dbReference type="VEuPathDB" id="FungiDB:SPBC244.02c"/>
<dbReference type="eggNOG" id="KOG2396">
    <property type="taxonomic scope" value="Eukaryota"/>
</dbReference>
<dbReference type="HOGENOM" id="CLU_026025_3_0_1"/>
<dbReference type="InParanoid" id="O60188"/>
<dbReference type="OMA" id="FTENANM"/>
<dbReference type="PhylomeDB" id="O60188"/>
<dbReference type="Reactome" id="R-SPO-6791226">
    <property type="pathway name" value="Major pathway of rRNA processing in the nucleolus and cytosol"/>
</dbReference>
<dbReference type="PRO" id="PR:O60188"/>
<dbReference type="Proteomes" id="UP000002485">
    <property type="component" value="Chromosome II"/>
</dbReference>
<dbReference type="GO" id="GO:0032153">
    <property type="term" value="C:cell division site"/>
    <property type="evidence" value="ECO:0007005"/>
    <property type="project" value="PomBase"/>
</dbReference>
<dbReference type="GO" id="GO:0005829">
    <property type="term" value="C:cytosol"/>
    <property type="evidence" value="ECO:0007005"/>
    <property type="project" value="PomBase"/>
</dbReference>
<dbReference type="GO" id="GO:0005634">
    <property type="term" value="C:nucleus"/>
    <property type="evidence" value="ECO:0007005"/>
    <property type="project" value="PomBase"/>
</dbReference>
<dbReference type="GO" id="GO:0034388">
    <property type="term" value="C:Pwp2p-containing subcomplex of 90S preribosome"/>
    <property type="evidence" value="ECO:0000318"/>
    <property type="project" value="GO_Central"/>
</dbReference>
<dbReference type="GO" id="GO:0032040">
    <property type="term" value="C:small-subunit processome"/>
    <property type="evidence" value="ECO:0000318"/>
    <property type="project" value="GO_Central"/>
</dbReference>
<dbReference type="GO" id="GO:0005732">
    <property type="term" value="C:sno(s)RNA-containing ribonucleoprotein complex"/>
    <property type="evidence" value="ECO:0000266"/>
    <property type="project" value="PomBase"/>
</dbReference>
<dbReference type="GO" id="GO:0030515">
    <property type="term" value="F:snoRNA binding"/>
    <property type="evidence" value="ECO:0000318"/>
    <property type="project" value="GO_Central"/>
</dbReference>
<dbReference type="GO" id="GO:0000462">
    <property type="term" value="P:maturation of SSU-rRNA from tricistronic rRNA transcript (SSU-rRNA, 5.8S rRNA, LSU-rRNA)"/>
    <property type="evidence" value="ECO:0000318"/>
    <property type="project" value="GO_Central"/>
</dbReference>
<dbReference type="Gene3D" id="1.25.40.10">
    <property type="entry name" value="Tetratricopeptide repeat domain"/>
    <property type="match status" value="1"/>
</dbReference>
<dbReference type="InterPro" id="IPR003107">
    <property type="entry name" value="HAT"/>
</dbReference>
<dbReference type="InterPro" id="IPR011990">
    <property type="entry name" value="TPR-like_helical_dom_sf"/>
</dbReference>
<dbReference type="InterPro" id="IPR013949">
    <property type="entry name" value="Utp6"/>
</dbReference>
<dbReference type="InterPro" id="IPR055347">
    <property type="entry name" value="UTP6_N"/>
</dbReference>
<dbReference type="PANTHER" id="PTHR23271">
    <property type="entry name" value="HEPATOCELLULAR CARCINOMA-ASSOCIATED ANTIGEN 66"/>
    <property type="match status" value="1"/>
</dbReference>
<dbReference type="PANTHER" id="PTHR23271:SF1">
    <property type="entry name" value="U3 SMALL NUCLEOLAR RNA-ASSOCIATED PROTEIN 6 HOMOLOG"/>
    <property type="match status" value="1"/>
</dbReference>
<dbReference type="Pfam" id="PF08640">
    <property type="entry name" value="U3_assoc_6"/>
    <property type="match status" value="1"/>
</dbReference>
<dbReference type="SMART" id="SM00386">
    <property type="entry name" value="HAT"/>
    <property type="match status" value="4"/>
</dbReference>
<dbReference type="SUPFAM" id="SSF48452">
    <property type="entry name" value="TPR-like"/>
    <property type="match status" value="1"/>
</dbReference>
<protein>
    <recommendedName>
        <fullName>U3 small nucleolar RNA-associated protein 6</fullName>
        <shortName>U3 snoRNA-associated protein 6</shortName>
    </recommendedName>
</protein>
<comment type="function">
    <text evidence="1">Component of the SSU processome, a pre-ribosomal particle required for the maturation of the 18S rRNA from the 35S pre-rRNA precursor.</text>
</comment>
<comment type="subunit">
    <text evidence="1">Component of the ribosomal small subunit (SSU) processome, composed of the 35S pre-rRNA precursor, the U3 snoRNA, and at least 40 protein subunits. Interacts with U3 snoRNA.</text>
</comment>
<comment type="subcellular location">
    <subcellularLocation>
        <location evidence="1">Nucleus</location>
        <location evidence="1">Nucleolus</location>
    </subcellularLocation>
</comment>
<comment type="similarity">
    <text evidence="2">Belongs to the UTP6 family.</text>
</comment>
<evidence type="ECO:0000250" key="1"/>
<evidence type="ECO:0000305" key="2"/>